<proteinExistence type="inferred from homology"/>
<dbReference type="EC" id="2.7.7.6" evidence="1"/>
<dbReference type="EMBL" id="CP000901">
    <property type="protein sequence ID" value="ABX87303.1"/>
    <property type="molecule type" value="Genomic_DNA"/>
</dbReference>
<dbReference type="RefSeq" id="WP_012229808.1">
    <property type="nucleotide sequence ID" value="NC_010159.1"/>
</dbReference>
<dbReference type="SMR" id="A9R0H8"/>
<dbReference type="KEGG" id="ypg:YpAngola_A2810"/>
<dbReference type="PATRIC" id="fig|349746.12.peg.3844"/>
<dbReference type="GO" id="GO:0000428">
    <property type="term" value="C:DNA-directed RNA polymerase complex"/>
    <property type="evidence" value="ECO:0007669"/>
    <property type="project" value="UniProtKB-KW"/>
</dbReference>
<dbReference type="GO" id="GO:0003677">
    <property type="term" value="F:DNA binding"/>
    <property type="evidence" value="ECO:0007669"/>
    <property type="project" value="UniProtKB-UniRule"/>
</dbReference>
<dbReference type="GO" id="GO:0003899">
    <property type="term" value="F:DNA-directed RNA polymerase activity"/>
    <property type="evidence" value="ECO:0007669"/>
    <property type="project" value="UniProtKB-UniRule"/>
</dbReference>
<dbReference type="GO" id="GO:0032549">
    <property type="term" value="F:ribonucleoside binding"/>
    <property type="evidence" value="ECO:0007669"/>
    <property type="project" value="InterPro"/>
</dbReference>
<dbReference type="GO" id="GO:0006351">
    <property type="term" value="P:DNA-templated transcription"/>
    <property type="evidence" value="ECO:0007669"/>
    <property type="project" value="UniProtKB-UniRule"/>
</dbReference>
<dbReference type="CDD" id="cd00653">
    <property type="entry name" value="RNA_pol_B_RPB2"/>
    <property type="match status" value="1"/>
</dbReference>
<dbReference type="FunFam" id="2.30.150.10:FF:000001">
    <property type="entry name" value="DNA-directed RNA polymerase subunit beta"/>
    <property type="match status" value="1"/>
</dbReference>
<dbReference type="FunFam" id="2.40.270.10:FF:000003">
    <property type="entry name" value="DNA-directed RNA polymerase subunit beta"/>
    <property type="match status" value="1"/>
</dbReference>
<dbReference type="FunFam" id="2.40.270.10:FF:000004">
    <property type="entry name" value="DNA-directed RNA polymerase subunit beta"/>
    <property type="match status" value="1"/>
</dbReference>
<dbReference type="FunFam" id="2.40.50.100:FF:000006">
    <property type="entry name" value="DNA-directed RNA polymerase subunit beta"/>
    <property type="match status" value="1"/>
</dbReference>
<dbReference type="FunFam" id="2.40.50.150:FF:000001">
    <property type="entry name" value="DNA-directed RNA polymerase subunit beta"/>
    <property type="match status" value="1"/>
</dbReference>
<dbReference type="FunFam" id="3.90.1100.10:FF:000002">
    <property type="entry name" value="DNA-directed RNA polymerase subunit beta"/>
    <property type="match status" value="1"/>
</dbReference>
<dbReference type="FunFam" id="3.90.1110.10:FF:000001">
    <property type="entry name" value="DNA-directed RNA polymerase subunit beta"/>
    <property type="match status" value="1"/>
</dbReference>
<dbReference type="FunFam" id="3.90.1110.10:FF:000004">
    <property type="entry name" value="DNA-directed RNA polymerase subunit beta"/>
    <property type="match status" value="1"/>
</dbReference>
<dbReference type="FunFam" id="3.90.1800.10:FF:000001">
    <property type="entry name" value="DNA-directed RNA polymerase subunit beta"/>
    <property type="match status" value="1"/>
</dbReference>
<dbReference type="Gene3D" id="2.40.50.100">
    <property type="match status" value="1"/>
</dbReference>
<dbReference type="Gene3D" id="2.40.50.150">
    <property type="match status" value="1"/>
</dbReference>
<dbReference type="Gene3D" id="3.90.1100.10">
    <property type="match status" value="2"/>
</dbReference>
<dbReference type="Gene3D" id="2.30.150.10">
    <property type="entry name" value="DNA-directed RNA polymerase, beta subunit, external 1 domain"/>
    <property type="match status" value="1"/>
</dbReference>
<dbReference type="Gene3D" id="2.40.270.10">
    <property type="entry name" value="DNA-directed RNA polymerase, subunit 2, domain 6"/>
    <property type="match status" value="1"/>
</dbReference>
<dbReference type="Gene3D" id="3.90.1800.10">
    <property type="entry name" value="RNA polymerase alpha subunit dimerisation domain"/>
    <property type="match status" value="1"/>
</dbReference>
<dbReference type="Gene3D" id="3.90.1110.10">
    <property type="entry name" value="RNA polymerase Rpb2, domain 2"/>
    <property type="match status" value="1"/>
</dbReference>
<dbReference type="HAMAP" id="MF_01321">
    <property type="entry name" value="RNApol_bact_RpoB"/>
    <property type="match status" value="1"/>
</dbReference>
<dbReference type="InterPro" id="IPR042107">
    <property type="entry name" value="DNA-dir_RNA_pol_bsu_ext_1_sf"/>
</dbReference>
<dbReference type="InterPro" id="IPR019462">
    <property type="entry name" value="DNA-dir_RNA_pol_bsu_external_1"/>
</dbReference>
<dbReference type="InterPro" id="IPR015712">
    <property type="entry name" value="DNA-dir_RNA_pol_su2"/>
</dbReference>
<dbReference type="InterPro" id="IPR007120">
    <property type="entry name" value="DNA-dir_RNAP_su2_dom"/>
</dbReference>
<dbReference type="InterPro" id="IPR037033">
    <property type="entry name" value="DNA-dir_RNAP_su2_hyb_sf"/>
</dbReference>
<dbReference type="InterPro" id="IPR010243">
    <property type="entry name" value="RNA_pol_bsu_bac"/>
</dbReference>
<dbReference type="InterPro" id="IPR007121">
    <property type="entry name" value="RNA_pol_bsu_CS"/>
</dbReference>
<dbReference type="InterPro" id="IPR007644">
    <property type="entry name" value="RNA_pol_bsu_protrusion"/>
</dbReference>
<dbReference type="InterPro" id="IPR007642">
    <property type="entry name" value="RNA_pol_Rpb2_2"/>
</dbReference>
<dbReference type="InterPro" id="IPR037034">
    <property type="entry name" value="RNA_pol_Rpb2_2_sf"/>
</dbReference>
<dbReference type="InterPro" id="IPR007645">
    <property type="entry name" value="RNA_pol_Rpb2_3"/>
</dbReference>
<dbReference type="InterPro" id="IPR007641">
    <property type="entry name" value="RNA_pol_Rpb2_7"/>
</dbReference>
<dbReference type="InterPro" id="IPR014724">
    <property type="entry name" value="RNA_pol_RPB2_OB-fold"/>
</dbReference>
<dbReference type="NCBIfam" id="NF001616">
    <property type="entry name" value="PRK00405.1"/>
    <property type="match status" value="1"/>
</dbReference>
<dbReference type="NCBIfam" id="TIGR02013">
    <property type="entry name" value="rpoB"/>
    <property type="match status" value="1"/>
</dbReference>
<dbReference type="PANTHER" id="PTHR20856">
    <property type="entry name" value="DNA-DIRECTED RNA POLYMERASE I SUBUNIT 2"/>
    <property type="match status" value="1"/>
</dbReference>
<dbReference type="Pfam" id="PF04563">
    <property type="entry name" value="RNA_pol_Rpb2_1"/>
    <property type="match status" value="1"/>
</dbReference>
<dbReference type="Pfam" id="PF04561">
    <property type="entry name" value="RNA_pol_Rpb2_2"/>
    <property type="match status" value="2"/>
</dbReference>
<dbReference type="Pfam" id="PF04565">
    <property type="entry name" value="RNA_pol_Rpb2_3"/>
    <property type="match status" value="1"/>
</dbReference>
<dbReference type="Pfam" id="PF10385">
    <property type="entry name" value="RNA_pol_Rpb2_45"/>
    <property type="match status" value="1"/>
</dbReference>
<dbReference type="Pfam" id="PF00562">
    <property type="entry name" value="RNA_pol_Rpb2_6"/>
    <property type="match status" value="1"/>
</dbReference>
<dbReference type="Pfam" id="PF04560">
    <property type="entry name" value="RNA_pol_Rpb2_7"/>
    <property type="match status" value="1"/>
</dbReference>
<dbReference type="SUPFAM" id="SSF64484">
    <property type="entry name" value="beta and beta-prime subunits of DNA dependent RNA-polymerase"/>
    <property type="match status" value="1"/>
</dbReference>
<dbReference type="PROSITE" id="PS01166">
    <property type="entry name" value="RNA_POL_BETA"/>
    <property type="match status" value="1"/>
</dbReference>
<protein>
    <recommendedName>
        <fullName evidence="1">DNA-directed RNA polymerase subunit beta</fullName>
        <shortName evidence="1">RNAP subunit beta</shortName>
        <ecNumber evidence="1">2.7.7.6</ecNumber>
    </recommendedName>
    <alternativeName>
        <fullName evidence="1">RNA polymerase subunit beta</fullName>
    </alternativeName>
    <alternativeName>
        <fullName evidence="1">Transcriptase subunit beta</fullName>
    </alternativeName>
</protein>
<sequence length="1342" mass="150399">MVYSYTEKKRIRKDFGKRPQVLDIPYLLSIQLDSFQKFIEQDPEGQHGLEAAFRSVFPIQSYSGNSELQYVSYRLGEPVFDVKECQIRGVTYSAPLRVKLRLVIYEREAPEGTVKDIKEQEVYMGEIPLMTENGTFVINGTERVIVSQLHRSPGVFFDSDKGKTHSSGKVLYNARIIPYRGPWLDFEFDPKDNLFVRIDRRRKLPATIILRALNFTTAQILDLFFEKVVFEIRDNKLQMELVPERLRGETASFDIEANGKVYVEKARRITARHIRQLEKDGIDRIEVPVEYIAGKVVAKDYVDASTGELICAANMELSLDLLAKLSQAGHKQIETLFTNDLDHGAYISETLRVDPTSDRLSALVEIYRMMRPGEPPTREAAENLFENLFFSEDRYDLSAVGRMKFNRSLLRDEIEGSGILSKEDITEVMKKLIDIRNGRGEVDDIDHLGNRRIRSVGEMAENQFRVGLVRVERAVKERLSLGDLDTLMPQDMINAKPISAAVKEFFGSSQLSQFMDQNNPLSEITHKRRISALGPGGLTRERAGFEVRDVHPTHYGRVCPIETPEGPNIGLINSLSVYAQTNEYGFLETPYRRVRDGVVTDEINYLSAIEEGNFVIAQANSNLDDEGRFLEDLVTCRSKGESSLFSREQVDYMDVSTQQIVSVGASLIPFLEHDDANRALMGANMQRQAVPTLRADKPLVGTGMERAVAVDSGVTSVAKRGGTVQYVDASRIVIKVNEDEMHPGEAGIDIYNLTKYTRSNQNTCINQMPCVNLGEPIERGDVLADGPSTDLGELALGQNMRVAFMPWNGYNFEDSILVSERVVQEDRFTTIHIQELACVSRDTKLGPEEITADIPNVGEAALSKLDESGIVYIGAEVTGGDILVGKVTPKGETQLTPEEKLLRAIFGEKASDVKDSSLRVPNGVSGTVIDVQVFTRDGVEKDKRALEIEEMQLKQAKKDLTEELQILEAGLFARIHAVLVSGGIEAEKLSKLPRERWLELGLTDEDKQNQLEQLAEQYDEMKSEFEKKMDAKRRKITQGDDLAPGVLKIVKVYLAVKRQIQPGDKMAGRHGNKGVISKINPIEDMPYDENGTPVDIVLNPLGVPSRMNIGQILETHLGMAAKGIGEKINAMLKKQEEVAKLREFIQKAYDLGDNVCQKVDLSTFTDDEVLRLAENLKKGMPIATPVFDGATEKEIKELLQLGGLPTSGQITLFDGRTGEQFERQVTVGYMYMLKLNHLVDDKMHARSTGSYSLVTQQPLGGKAQFGGQRFGEMEVWALEAYGAAYTLQEMLTVKSDDVNGRTKMYKNIVDGDHRMEPGMPESFNVLLKEIRSLGINIELEEE</sequence>
<name>RPOB_YERPG</name>
<accession>A9R0H8</accession>
<comment type="function">
    <text evidence="1">DNA-dependent RNA polymerase catalyzes the transcription of DNA into RNA using the four ribonucleoside triphosphates as substrates.</text>
</comment>
<comment type="catalytic activity">
    <reaction evidence="1">
        <text>RNA(n) + a ribonucleoside 5'-triphosphate = RNA(n+1) + diphosphate</text>
        <dbReference type="Rhea" id="RHEA:21248"/>
        <dbReference type="Rhea" id="RHEA-COMP:14527"/>
        <dbReference type="Rhea" id="RHEA-COMP:17342"/>
        <dbReference type="ChEBI" id="CHEBI:33019"/>
        <dbReference type="ChEBI" id="CHEBI:61557"/>
        <dbReference type="ChEBI" id="CHEBI:140395"/>
        <dbReference type="EC" id="2.7.7.6"/>
    </reaction>
</comment>
<comment type="subunit">
    <text evidence="1">The RNAP catalytic core consists of 2 alpha, 1 beta, 1 beta' and 1 omega subunit. When a sigma factor is associated with the core the holoenzyme is formed, which can initiate transcription.</text>
</comment>
<comment type="similarity">
    <text evidence="1">Belongs to the RNA polymerase beta chain family.</text>
</comment>
<feature type="chain" id="PRO_1000141755" description="DNA-directed RNA polymerase subunit beta">
    <location>
        <begin position="1"/>
        <end position="1342"/>
    </location>
</feature>
<gene>
    <name evidence="1" type="primary">rpoB</name>
    <name type="ordered locus">YpAngola_A2810</name>
</gene>
<evidence type="ECO:0000255" key="1">
    <source>
        <dbReference type="HAMAP-Rule" id="MF_01321"/>
    </source>
</evidence>
<organism>
    <name type="scientific">Yersinia pestis bv. Antiqua (strain Angola)</name>
    <dbReference type="NCBI Taxonomy" id="349746"/>
    <lineage>
        <taxon>Bacteria</taxon>
        <taxon>Pseudomonadati</taxon>
        <taxon>Pseudomonadota</taxon>
        <taxon>Gammaproteobacteria</taxon>
        <taxon>Enterobacterales</taxon>
        <taxon>Yersiniaceae</taxon>
        <taxon>Yersinia</taxon>
    </lineage>
</organism>
<keyword id="KW-0240">DNA-directed RNA polymerase</keyword>
<keyword id="KW-0548">Nucleotidyltransferase</keyword>
<keyword id="KW-0804">Transcription</keyword>
<keyword id="KW-0808">Transferase</keyword>
<reference key="1">
    <citation type="journal article" date="2010" name="J. Bacteriol.">
        <title>Genome sequence of the deep-rooted Yersinia pestis strain Angola reveals new insights into the evolution and pangenome of the plague bacterium.</title>
        <authorList>
            <person name="Eppinger M."/>
            <person name="Worsham P.L."/>
            <person name="Nikolich M.P."/>
            <person name="Riley D.R."/>
            <person name="Sebastian Y."/>
            <person name="Mou S."/>
            <person name="Achtman M."/>
            <person name="Lindler L.E."/>
            <person name="Ravel J."/>
        </authorList>
    </citation>
    <scope>NUCLEOTIDE SEQUENCE [LARGE SCALE GENOMIC DNA]</scope>
    <source>
        <strain>Angola</strain>
    </source>
</reference>